<gene>
    <name evidence="1" type="primary">psbI</name>
</gene>
<sequence length="36" mass="4168">MLTLKLFVYTVVIFFVSLFIFGFLSNDPGRNPGREE</sequence>
<organism>
    <name type="scientific">Nicotiana tabacum</name>
    <name type="common">Common tobacco</name>
    <dbReference type="NCBI Taxonomy" id="4097"/>
    <lineage>
        <taxon>Eukaryota</taxon>
        <taxon>Viridiplantae</taxon>
        <taxon>Streptophyta</taxon>
        <taxon>Embryophyta</taxon>
        <taxon>Tracheophyta</taxon>
        <taxon>Spermatophyta</taxon>
        <taxon>Magnoliopsida</taxon>
        <taxon>eudicotyledons</taxon>
        <taxon>Gunneridae</taxon>
        <taxon>Pentapetalae</taxon>
        <taxon>asterids</taxon>
        <taxon>lamiids</taxon>
        <taxon>Solanales</taxon>
        <taxon>Solanaceae</taxon>
        <taxon>Nicotianoideae</taxon>
        <taxon>Nicotianeae</taxon>
        <taxon>Nicotiana</taxon>
    </lineage>
</organism>
<dbReference type="EMBL" id="Z00044">
    <property type="protein sequence ID" value="CAJ32478.1"/>
    <property type="molecule type" value="Genomic_DNA"/>
</dbReference>
<dbReference type="PIR" id="S05608">
    <property type="entry name" value="F2NTI"/>
</dbReference>
<dbReference type="SMR" id="P62102"/>
<dbReference type="Proteomes" id="UP000084051">
    <property type="component" value="Unplaced"/>
</dbReference>
<dbReference type="GO" id="GO:0009535">
    <property type="term" value="C:chloroplast thylakoid membrane"/>
    <property type="evidence" value="ECO:0007669"/>
    <property type="project" value="UniProtKB-SubCell"/>
</dbReference>
<dbReference type="GO" id="GO:0009539">
    <property type="term" value="C:photosystem II reaction center"/>
    <property type="evidence" value="ECO:0007669"/>
    <property type="project" value="InterPro"/>
</dbReference>
<dbReference type="GO" id="GO:0015979">
    <property type="term" value="P:photosynthesis"/>
    <property type="evidence" value="ECO:0007669"/>
    <property type="project" value="UniProtKB-UniRule"/>
</dbReference>
<dbReference type="HAMAP" id="MF_01316">
    <property type="entry name" value="PSII_PsbI"/>
    <property type="match status" value="1"/>
</dbReference>
<dbReference type="InterPro" id="IPR003686">
    <property type="entry name" value="PSII_PsbI"/>
</dbReference>
<dbReference type="InterPro" id="IPR037271">
    <property type="entry name" value="PSII_PsbI_sf"/>
</dbReference>
<dbReference type="NCBIfam" id="NF002735">
    <property type="entry name" value="PRK02655.1"/>
    <property type="match status" value="1"/>
</dbReference>
<dbReference type="PANTHER" id="PTHR35772">
    <property type="entry name" value="PHOTOSYSTEM II REACTION CENTER PROTEIN I"/>
    <property type="match status" value="1"/>
</dbReference>
<dbReference type="PANTHER" id="PTHR35772:SF1">
    <property type="entry name" value="PHOTOSYSTEM II REACTION CENTER PROTEIN I"/>
    <property type="match status" value="1"/>
</dbReference>
<dbReference type="Pfam" id="PF02532">
    <property type="entry name" value="PsbI"/>
    <property type="match status" value="1"/>
</dbReference>
<dbReference type="SUPFAM" id="SSF161041">
    <property type="entry name" value="Photosystem II reaction center protein I, PsbI"/>
    <property type="match status" value="1"/>
</dbReference>
<reference key="1">
    <citation type="journal article" date="1986" name="EMBO J.">
        <title>The complete nucleotide sequence of the tobacco chloroplast genome: its gene organization and expression.</title>
        <authorList>
            <person name="Shinozaki K."/>
            <person name="Ohme M."/>
            <person name="Tanaka M."/>
            <person name="Wakasugi T."/>
            <person name="Hayashida N."/>
            <person name="Matsubayashi T."/>
            <person name="Zaita N."/>
            <person name="Chunwongse J."/>
            <person name="Obokata J."/>
            <person name="Yamaguchi-Shinozaki K."/>
            <person name="Ohto C."/>
            <person name="Torazawa K."/>
            <person name="Meng B.-Y."/>
            <person name="Sugita M."/>
            <person name="Deno H."/>
            <person name="Kamogashira T."/>
            <person name="Yamada K."/>
            <person name="Kusuda J."/>
            <person name="Takaiwa F."/>
            <person name="Kato A."/>
            <person name="Tohdoh N."/>
            <person name="Shimada H."/>
            <person name="Sugiura M."/>
        </authorList>
    </citation>
    <scope>NUCLEOTIDE SEQUENCE [LARGE SCALE GENOMIC DNA]</scope>
    <source>
        <strain>cv. Bright Yellow 4</strain>
    </source>
</reference>
<reference key="2">
    <citation type="journal article" date="2006" name="J. Biol. Chem.">
        <title>PsbI affects the stability, function, and phosphorylation patterns of photosystem II assemblies in tobacco.</title>
        <authorList>
            <person name="Schwenkert S."/>
            <person name="Umate P."/>
            <person name="Dal Bosco C."/>
            <person name="Volz S."/>
            <person name="Mlcochova L."/>
            <person name="Zoryan M."/>
            <person name="Eichacker L.A."/>
            <person name="Ohad I."/>
            <person name="Herrmann R.G."/>
            <person name="Meurer J."/>
        </authorList>
    </citation>
    <scope>FUNCTION</scope>
    <scope>DISRUPTION PHENOTYPE</scope>
    <source>
        <strain>cv. Petit Havana</strain>
    </source>
</reference>
<evidence type="ECO:0000255" key="1">
    <source>
        <dbReference type="HAMAP-Rule" id="MF_01316"/>
    </source>
</evidence>
<evidence type="ECO:0000269" key="2">
    <source>
    </source>
</evidence>
<keyword id="KW-0150">Chloroplast</keyword>
<keyword id="KW-0472">Membrane</keyword>
<keyword id="KW-0602">Photosynthesis</keyword>
<keyword id="KW-0604">Photosystem II</keyword>
<keyword id="KW-0934">Plastid</keyword>
<keyword id="KW-0674">Reaction center</keyword>
<keyword id="KW-1185">Reference proteome</keyword>
<keyword id="KW-0793">Thylakoid</keyword>
<keyword id="KW-0812">Transmembrane</keyword>
<keyword id="KW-1133">Transmembrane helix</keyword>
<protein>
    <recommendedName>
        <fullName evidence="1">Photosystem II reaction center protein I</fullName>
        <shortName evidence="1">PSII-I</shortName>
    </recommendedName>
    <alternativeName>
        <fullName evidence="1">PSII 4.8 kDa protein</fullName>
    </alternativeName>
</protein>
<accession>P62102</accession>
<accession>P09970</accession>
<accession>Q3HKB3</accession>
<geneLocation type="chloroplast"/>
<feature type="chain" id="PRO_0000219657" description="Photosystem II reaction center protein I">
    <location>
        <begin position="1"/>
        <end position="36"/>
    </location>
</feature>
<feature type="transmembrane region" description="Helical" evidence="1">
    <location>
        <begin position="4"/>
        <end position="24"/>
    </location>
</feature>
<comment type="function">
    <text evidence="1 2">One of the components of the core complex of photosystem II (PSII), required for the stability, but not for the assembly of dimeric PSII and PSII-outer antenna supercomplexes (PSII-LHCII), and for assembly of the functional Q(A)-binding site (PubMed:16920705). PSII is a light-driven water:plastoquinone oxidoreductase that uses light energy to abstract electrons from H(2)O, generating O(2) and a proton gradient subsequently used for ATP formation. It consists of a core antenna complex that captures photons, and an electron transfer chain that converts photonic excitation into a charge separation.</text>
</comment>
<comment type="subunit">
    <text evidence="1">PSII is composed of 1 copy each of membrane proteins PsbA, PsbB, PsbC, PsbD, PsbE, PsbF, PsbH, PsbI, PsbJ, PsbK, PsbL, PsbM, PsbT, PsbX, PsbY, PsbZ, Psb30/Ycf12, at least 3 peripheral proteins of the oxygen-evolving complex and a large number of cofactors. It forms dimeric complexes.</text>
</comment>
<comment type="subcellular location">
    <subcellularLocation>
        <location evidence="1">Plastid</location>
        <location evidence="1">Chloroplast thylakoid membrane</location>
        <topology evidence="1">Single-pass membrane protein</topology>
    </subcellularLocation>
</comment>
<comment type="disruption phenotype">
    <text evidence="2">Able to grow under greenhouse conditions, increased sensitivity to high light. Able to assemble dimeric PSII and PSII-LHCII complexes, but they are not stable. Almost complete loss of phosphorylation of D1, D2 and CP43 (PsbA, PsbD and PsbC respectively), altered phosphorylation of LHCII.</text>
</comment>
<comment type="similarity">
    <text evidence="1">Belongs to the PsbI family.</text>
</comment>
<name>PSBI_TOBAC</name>
<proteinExistence type="inferred from homology"/>